<reference key="1">
    <citation type="journal article" date="2004" name="Proc. Natl. Acad. Sci. U.S.A.">
        <title>The complete genomic sequence of Nocardia farcinica IFM 10152.</title>
        <authorList>
            <person name="Ishikawa J."/>
            <person name="Yamashita A."/>
            <person name="Mikami Y."/>
            <person name="Hoshino Y."/>
            <person name="Kurita H."/>
            <person name="Hotta K."/>
            <person name="Shiba T."/>
            <person name="Hattori M."/>
        </authorList>
    </citation>
    <scope>NUCLEOTIDE SEQUENCE [LARGE SCALE GENOMIC DNA]</scope>
    <source>
        <strain>IFM 10152</strain>
    </source>
</reference>
<comment type="function">
    <text evidence="2">Cell wall formation.</text>
</comment>
<comment type="catalytic activity">
    <reaction evidence="2">
        <text>2 D-alanine + ATP = D-alanyl-D-alanine + ADP + phosphate + H(+)</text>
        <dbReference type="Rhea" id="RHEA:11224"/>
        <dbReference type="ChEBI" id="CHEBI:15378"/>
        <dbReference type="ChEBI" id="CHEBI:30616"/>
        <dbReference type="ChEBI" id="CHEBI:43474"/>
        <dbReference type="ChEBI" id="CHEBI:57416"/>
        <dbReference type="ChEBI" id="CHEBI:57822"/>
        <dbReference type="ChEBI" id="CHEBI:456216"/>
        <dbReference type="EC" id="6.3.2.4"/>
    </reaction>
</comment>
<comment type="cofactor">
    <cofactor evidence="1">
        <name>Mg(2+)</name>
        <dbReference type="ChEBI" id="CHEBI:18420"/>
    </cofactor>
    <cofactor evidence="1">
        <name>Mn(2+)</name>
        <dbReference type="ChEBI" id="CHEBI:29035"/>
    </cofactor>
    <text evidence="1">Binds 2 magnesium or manganese ions per subunit.</text>
</comment>
<comment type="pathway">
    <text evidence="2">Cell wall biogenesis; peptidoglycan biosynthesis.</text>
</comment>
<comment type="subcellular location">
    <subcellularLocation>
        <location evidence="2">Cytoplasm</location>
    </subcellularLocation>
</comment>
<comment type="similarity">
    <text evidence="2">Belongs to the D-alanine--D-alanine ligase family.</text>
</comment>
<protein>
    <recommendedName>
        <fullName evidence="2">D-alanine--D-alanine ligase</fullName>
        <ecNumber evidence="2">6.3.2.4</ecNumber>
    </recommendedName>
    <alternativeName>
        <fullName evidence="2">D-Ala-D-Ala ligase</fullName>
    </alternativeName>
    <alternativeName>
        <fullName evidence="2">D-alanylalanine synthetase</fullName>
    </alternativeName>
</protein>
<dbReference type="EC" id="6.3.2.4" evidence="2"/>
<dbReference type="EMBL" id="AP006618">
    <property type="protein sequence ID" value="BAD59054.1"/>
    <property type="molecule type" value="Genomic_DNA"/>
</dbReference>
<dbReference type="RefSeq" id="WP_011210739.1">
    <property type="nucleotide sequence ID" value="NC_006361.1"/>
</dbReference>
<dbReference type="SMR" id="Q5YRY7"/>
<dbReference type="STRING" id="247156.NFA_42050"/>
<dbReference type="GeneID" id="61134839"/>
<dbReference type="KEGG" id="nfa:NFA_42050"/>
<dbReference type="eggNOG" id="COG1181">
    <property type="taxonomic scope" value="Bacteria"/>
</dbReference>
<dbReference type="HOGENOM" id="CLU_039268_0_1_11"/>
<dbReference type="OrthoDB" id="9813261at2"/>
<dbReference type="UniPathway" id="UPA00219"/>
<dbReference type="Proteomes" id="UP000006820">
    <property type="component" value="Chromosome"/>
</dbReference>
<dbReference type="GO" id="GO:0005829">
    <property type="term" value="C:cytosol"/>
    <property type="evidence" value="ECO:0007669"/>
    <property type="project" value="TreeGrafter"/>
</dbReference>
<dbReference type="GO" id="GO:0005524">
    <property type="term" value="F:ATP binding"/>
    <property type="evidence" value="ECO:0007669"/>
    <property type="project" value="UniProtKB-KW"/>
</dbReference>
<dbReference type="GO" id="GO:0008716">
    <property type="term" value="F:D-alanine-D-alanine ligase activity"/>
    <property type="evidence" value="ECO:0007669"/>
    <property type="project" value="UniProtKB-UniRule"/>
</dbReference>
<dbReference type="GO" id="GO:0046872">
    <property type="term" value="F:metal ion binding"/>
    <property type="evidence" value="ECO:0007669"/>
    <property type="project" value="UniProtKB-KW"/>
</dbReference>
<dbReference type="GO" id="GO:0071555">
    <property type="term" value="P:cell wall organization"/>
    <property type="evidence" value="ECO:0007669"/>
    <property type="project" value="UniProtKB-KW"/>
</dbReference>
<dbReference type="GO" id="GO:0009252">
    <property type="term" value="P:peptidoglycan biosynthetic process"/>
    <property type="evidence" value="ECO:0007669"/>
    <property type="project" value="UniProtKB-UniRule"/>
</dbReference>
<dbReference type="GO" id="GO:0008360">
    <property type="term" value="P:regulation of cell shape"/>
    <property type="evidence" value="ECO:0007669"/>
    <property type="project" value="UniProtKB-KW"/>
</dbReference>
<dbReference type="FunFam" id="3.30.470.20:FF:000008">
    <property type="entry name" value="D-alanine--D-alanine ligase"/>
    <property type="match status" value="1"/>
</dbReference>
<dbReference type="Gene3D" id="3.40.50.20">
    <property type="match status" value="1"/>
</dbReference>
<dbReference type="Gene3D" id="3.30.1490.20">
    <property type="entry name" value="ATP-grasp fold, A domain"/>
    <property type="match status" value="1"/>
</dbReference>
<dbReference type="Gene3D" id="3.30.470.20">
    <property type="entry name" value="ATP-grasp fold, B domain"/>
    <property type="match status" value="1"/>
</dbReference>
<dbReference type="HAMAP" id="MF_00047">
    <property type="entry name" value="Dala_Dala_lig"/>
    <property type="match status" value="1"/>
</dbReference>
<dbReference type="InterPro" id="IPR011761">
    <property type="entry name" value="ATP-grasp"/>
</dbReference>
<dbReference type="InterPro" id="IPR013815">
    <property type="entry name" value="ATP_grasp_subdomain_1"/>
</dbReference>
<dbReference type="InterPro" id="IPR000291">
    <property type="entry name" value="D-Ala_lig_Van_CS"/>
</dbReference>
<dbReference type="InterPro" id="IPR005905">
    <property type="entry name" value="D_ala_D_ala"/>
</dbReference>
<dbReference type="InterPro" id="IPR011095">
    <property type="entry name" value="Dala_Dala_lig_C"/>
</dbReference>
<dbReference type="InterPro" id="IPR011127">
    <property type="entry name" value="Dala_Dala_lig_N"/>
</dbReference>
<dbReference type="InterPro" id="IPR016185">
    <property type="entry name" value="PreATP-grasp_dom_sf"/>
</dbReference>
<dbReference type="NCBIfam" id="TIGR01205">
    <property type="entry name" value="D_ala_D_alaTIGR"/>
    <property type="match status" value="1"/>
</dbReference>
<dbReference type="NCBIfam" id="NF002378">
    <property type="entry name" value="PRK01372.1"/>
    <property type="match status" value="1"/>
</dbReference>
<dbReference type="NCBIfam" id="NF002528">
    <property type="entry name" value="PRK01966.1-4"/>
    <property type="match status" value="1"/>
</dbReference>
<dbReference type="PANTHER" id="PTHR23132">
    <property type="entry name" value="D-ALANINE--D-ALANINE LIGASE"/>
    <property type="match status" value="1"/>
</dbReference>
<dbReference type="PANTHER" id="PTHR23132:SF25">
    <property type="entry name" value="D-ALANINE--D-ALANINE LIGASE A"/>
    <property type="match status" value="1"/>
</dbReference>
<dbReference type="Pfam" id="PF07478">
    <property type="entry name" value="Dala_Dala_lig_C"/>
    <property type="match status" value="1"/>
</dbReference>
<dbReference type="Pfam" id="PF01820">
    <property type="entry name" value="Dala_Dala_lig_N"/>
    <property type="match status" value="1"/>
</dbReference>
<dbReference type="PIRSF" id="PIRSF039102">
    <property type="entry name" value="Ddl/VanB"/>
    <property type="match status" value="1"/>
</dbReference>
<dbReference type="SUPFAM" id="SSF56059">
    <property type="entry name" value="Glutathione synthetase ATP-binding domain-like"/>
    <property type="match status" value="1"/>
</dbReference>
<dbReference type="SUPFAM" id="SSF52440">
    <property type="entry name" value="PreATP-grasp domain"/>
    <property type="match status" value="1"/>
</dbReference>
<dbReference type="PROSITE" id="PS50975">
    <property type="entry name" value="ATP_GRASP"/>
    <property type="match status" value="1"/>
</dbReference>
<dbReference type="PROSITE" id="PS00843">
    <property type="entry name" value="DALA_DALA_LIGASE_1"/>
    <property type="match status" value="1"/>
</dbReference>
<dbReference type="PROSITE" id="PS00844">
    <property type="entry name" value="DALA_DALA_LIGASE_2"/>
    <property type="match status" value="1"/>
</dbReference>
<organism>
    <name type="scientific">Nocardia farcinica (strain IFM 10152)</name>
    <dbReference type="NCBI Taxonomy" id="247156"/>
    <lineage>
        <taxon>Bacteria</taxon>
        <taxon>Bacillati</taxon>
        <taxon>Actinomycetota</taxon>
        <taxon>Actinomycetes</taxon>
        <taxon>Mycobacteriales</taxon>
        <taxon>Nocardiaceae</taxon>
        <taxon>Nocardia</taxon>
    </lineage>
</organism>
<name>DDL_NOCFA</name>
<keyword id="KW-0067">ATP-binding</keyword>
<keyword id="KW-0133">Cell shape</keyword>
<keyword id="KW-0961">Cell wall biogenesis/degradation</keyword>
<keyword id="KW-0963">Cytoplasm</keyword>
<keyword id="KW-0436">Ligase</keyword>
<keyword id="KW-0460">Magnesium</keyword>
<keyword id="KW-0464">Manganese</keyword>
<keyword id="KW-0479">Metal-binding</keyword>
<keyword id="KW-0547">Nucleotide-binding</keyword>
<keyword id="KW-0573">Peptidoglycan synthesis</keyword>
<keyword id="KW-1185">Reference proteome</keyword>
<proteinExistence type="inferred from homology"/>
<gene>
    <name evidence="2" type="primary">ddl</name>
    <name type="ordered locus">NFA_42050</name>
</gene>
<accession>Q5YRY7</accession>
<sequence>MTNRIRVAVVFGGRSNEHAVSCVSAGSVLRHLDPTRYEAVPIGITPQGGWVLANSDVAAIGLSHEALPSVDAGGTALTLTADPTRGGELVALDDAGAVLGTVDVVFPILHGPFGEDGTLQGMLELAGVPYVGPGVLASAAGMDKEFTKKLLAAEGLPVGTQVVLRPGTATLTEEQRERLGLPVFVKPARAGSSIGITKVDDWAALDTAIAAAREHDPKVIVEAGIVGREVECGVLEFPDGRISASVLAEIRMPEGDGPQFYDFDTKYLDDVCEFDVPAKLDDDIAEQVRELAVRAFQALDCQGLARVDFFVTADGPVINEINTMPGFTSISMYPRMWEATGIDYGTLVSTLIETALARGTGLR</sequence>
<evidence type="ECO:0000250" key="1"/>
<evidence type="ECO:0000255" key="2">
    <source>
        <dbReference type="HAMAP-Rule" id="MF_00047"/>
    </source>
</evidence>
<feature type="chain" id="PRO_0000341140" description="D-alanine--D-alanine ligase">
    <location>
        <begin position="1"/>
        <end position="363"/>
    </location>
</feature>
<feature type="domain" description="ATP-grasp" evidence="2">
    <location>
        <begin position="148"/>
        <end position="353"/>
    </location>
</feature>
<feature type="binding site" evidence="2">
    <location>
        <begin position="176"/>
        <end position="231"/>
    </location>
    <ligand>
        <name>ATP</name>
        <dbReference type="ChEBI" id="CHEBI:30616"/>
    </ligand>
</feature>
<feature type="binding site" evidence="2">
    <location>
        <position position="308"/>
    </location>
    <ligand>
        <name>Mg(2+)</name>
        <dbReference type="ChEBI" id="CHEBI:18420"/>
        <label>1</label>
    </ligand>
</feature>
<feature type="binding site" evidence="2">
    <location>
        <position position="320"/>
    </location>
    <ligand>
        <name>Mg(2+)</name>
        <dbReference type="ChEBI" id="CHEBI:18420"/>
        <label>1</label>
    </ligand>
</feature>
<feature type="binding site" evidence="2">
    <location>
        <position position="320"/>
    </location>
    <ligand>
        <name>Mg(2+)</name>
        <dbReference type="ChEBI" id="CHEBI:18420"/>
        <label>2</label>
    </ligand>
</feature>
<feature type="binding site" evidence="2">
    <location>
        <position position="322"/>
    </location>
    <ligand>
        <name>Mg(2+)</name>
        <dbReference type="ChEBI" id="CHEBI:18420"/>
        <label>2</label>
    </ligand>
</feature>